<evidence type="ECO:0000255" key="1">
    <source>
        <dbReference type="HAMAP-Rule" id="MF_00011"/>
    </source>
</evidence>
<sequence>MANTVIIGAQWGDEGKGKIVDMLSAQSRAIVRFQGGNNAGHTIKVQGEETILHLIPSGILHADKMCLIGNGVVLDPHVFLEEVDHLAAKGVDVSAARLGISKKAHLIMPYHKSLDKAREAKRASHKIGTTGRGIGPCYEDKAARVGLRAGDLANPDLVRAKVAHALQEKNTLLRDLYKFDPLDEAAVCQELLALAPRLLPYLTEVEDHIQKIQAQGGDILFEGAQGIHLDIDHGTYPFVTSSNTVSGNASAGCGVGPSALHRVVGIVKAYTTRVGSGPFPTEQLDDTGSYLRTQGHEFGATTGRPRRCGWLDAVVLRESVRLCGMTDIALTKLDVLQNLPGLRICVAYEYEGHKLDYMPQEEGALEKVTPVYEDLPGFEEDITGCTRFDDLPETVRAYIARIEELVGVKVSMVSVGAERRQTIVR</sequence>
<keyword id="KW-0963">Cytoplasm</keyword>
<keyword id="KW-0342">GTP-binding</keyword>
<keyword id="KW-0436">Ligase</keyword>
<keyword id="KW-0460">Magnesium</keyword>
<keyword id="KW-0479">Metal-binding</keyword>
<keyword id="KW-0547">Nucleotide-binding</keyword>
<keyword id="KW-0658">Purine biosynthesis</keyword>
<proteinExistence type="inferred from homology"/>
<organism>
    <name type="scientific">Desulfovibrio desulfuricans (strain ATCC 27774 / DSM 6949 / MB)</name>
    <dbReference type="NCBI Taxonomy" id="525146"/>
    <lineage>
        <taxon>Bacteria</taxon>
        <taxon>Pseudomonadati</taxon>
        <taxon>Thermodesulfobacteriota</taxon>
        <taxon>Desulfovibrionia</taxon>
        <taxon>Desulfovibrionales</taxon>
        <taxon>Desulfovibrionaceae</taxon>
        <taxon>Desulfovibrio</taxon>
    </lineage>
</organism>
<name>PURA_DESDA</name>
<dbReference type="EC" id="6.3.4.4" evidence="1"/>
<dbReference type="EMBL" id="CP001358">
    <property type="protein sequence ID" value="ACL50161.1"/>
    <property type="molecule type" value="Genomic_DNA"/>
</dbReference>
<dbReference type="SMR" id="B8J4N1"/>
<dbReference type="STRING" id="525146.Ddes_2266"/>
<dbReference type="KEGG" id="dds:Ddes_2266"/>
<dbReference type="eggNOG" id="COG0104">
    <property type="taxonomic scope" value="Bacteria"/>
</dbReference>
<dbReference type="HOGENOM" id="CLU_029848_0_0_7"/>
<dbReference type="UniPathway" id="UPA00075">
    <property type="reaction ID" value="UER00335"/>
</dbReference>
<dbReference type="GO" id="GO:0005737">
    <property type="term" value="C:cytoplasm"/>
    <property type="evidence" value="ECO:0007669"/>
    <property type="project" value="UniProtKB-SubCell"/>
</dbReference>
<dbReference type="GO" id="GO:0004019">
    <property type="term" value="F:adenylosuccinate synthase activity"/>
    <property type="evidence" value="ECO:0007669"/>
    <property type="project" value="UniProtKB-UniRule"/>
</dbReference>
<dbReference type="GO" id="GO:0005525">
    <property type="term" value="F:GTP binding"/>
    <property type="evidence" value="ECO:0007669"/>
    <property type="project" value="UniProtKB-UniRule"/>
</dbReference>
<dbReference type="GO" id="GO:0000287">
    <property type="term" value="F:magnesium ion binding"/>
    <property type="evidence" value="ECO:0007669"/>
    <property type="project" value="UniProtKB-UniRule"/>
</dbReference>
<dbReference type="GO" id="GO:0044208">
    <property type="term" value="P:'de novo' AMP biosynthetic process"/>
    <property type="evidence" value="ECO:0007669"/>
    <property type="project" value="UniProtKB-UniRule"/>
</dbReference>
<dbReference type="GO" id="GO:0046040">
    <property type="term" value="P:IMP metabolic process"/>
    <property type="evidence" value="ECO:0007669"/>
    <property type="project" value="TreeGrafter"/>
</dbReference>
<dbReference type="CDD" id="cd03108">
    <property type="entry name" value="AdSS"/>
    <property type="match status" value="1"/>
</dbReference>
<dbReference type="FunFam" id="1.10.300.10:FF:000001">
    <property type="entry name" value="Adenylosuccinate synthetase"/>
    <property type="match status" value="1"/>
</dbReference>
<dbReference type="FunFam" id="3.90.170.10:FF:000001">
    <property type="entry name" value="Adenylosuccinate synthetase"/>
    <property type="match status" value="1"/>
</dbReference>
<dbReference type="Gene3D" id="3.40.440.10">
    <property type="entry name" value="Adenylosuccinate Synthetase, subunit A, domain 1"/>
    <property type="match status" value="1"/>
</dbReference>
<dbReference type="Gene3D" id="1.10.300.10">
    <property type="entry name" value="Adenylosuccinate Synthetase, subunit A, domain 2"/>
    <property type="match status" value="1"/>
</dbReference>
<dbReference type="Gene3D" id="3.90.170.10">
    <property type="entry name" value="Adenylosuccinate Synthetase, subunit A, domain 3"/>
    <property type="match status" value="1"/>
</dbReference>
<dbReference type="HAMAP" id="MF_00011">
    <property type="entry name" value="Adenylosucc_synth"/>
    <property type="match status" value="1"/>
</dbReference>
<dbReference type="InterPro" id="IPR018220">
    <property type="entry name" value="Adenylosuccin_syn_GTP-bd"/>
</dbReference>
<dbReference type="InterPro" id="IPR033128">
    <property type="entry name" value="Adenylosuccin_syn_Lys_AS"/>
</dbReference>
<dbReference type="InterPro" id="IPR042109">
    <property type="entry name" value="Adenylosuccinate_synth_dom1"/>
</dbReference>
<dbReference type="InterPro" id="IPR042110">
    <property type="entry name" value="Adenylosuccinate_synth_dom2"/>
</dbReference>
<dbReference type="InterPro" id="IPR042111">
    <property type="entry name" value="Adenylosuccinate_synth_dom3"/>
</dbReference>
<dbReference type="InterPro" id="IPR001114">
    <property type="entry name" value="Adenylosuccinate_synthetase"/>
</dbReference>
<dbReference type="InterPro" id="IPR027417">
    <property type="entry name" value="P-loop_NTPase"/>
</dbReference>
<dbReference type="NCBIfam" id="NF002223">
    <property type="entry name" value="PRK01117.1"/>
    <property type="match status" value="1"/>
</dbReference>
<dbReference type="NCBIfam" id="TIGR00184">
    <property type="entry name" value="purA"/>
    <property type="match status" value="1"/>
</dbReference>
<dbReference type="PANTHER" id="PTHR11846">
    <property type="entry name" value="ADENYLOSUCCINATE SYNTHETASE"/>
    <property type="match status" value="1"/>
</dbReference>
<dbReference type="PANTHER" id="PTHR11846:SF0">
    <property type="entry name" value="ADENYLOSUCCINATE SYNTHETASE"/>
    <property type="match status" value="1"/>
</dbReference>
<dbReference type="Pfam" id="PF00709">
    <property type="entry name" value="Adenylsucc_synt"/>
    <property type="match status" value="1"/>
</dbReference>
<dbReference type="SMART" id="SM00788">
    <property type="entry name" value="Adenylsucc_synt"/>
    <property type="match status" value="1"/>
</dbReference>
<dbReference type="SUPFAM" id="SSF52540">
    <property type="entry name" value="P-loop containing nucleoside triphosphate hydrolases"/>
    <property type="match status" value="1"/>
</dbReference>
<dbReference type="PROSITE" id="PS01266">
    <property type="entry name" value="ADENYLOSUCCIN_SYN_1"/>
    <property type="match status" value="1"/>
</dbReference>
<dbReference type="PROSITE" id="PS00513">
    <property type="entry name" value="ADENYLOSUCCIN_SYN_2"/>
    <property type="match status" value="1"/>
</dbReference>
<comment type="function">
    <text evidence="1">Plays an important role in the de novo pathway of purine nucleotide biosynthesis. Catalyzes the first committed step in the biosynthesis of AMP from IMP.</text>
</comment>
<comment type="catalytic activity">
    <reaction evidence="1">
        <text>IMP + L-aspartate + GTP = N(6)-(1,2-dicarboxyethyl)-AMP + GDP + phosphate + 2 H(+)</text>
        <dbReference type="Rhea" id="RHEA:15753"/>
        <dbReference type="ChEBI" id="CHEBI:15378"/>
        <dbReference type="ChEBI" id="CHEBI:29991"/>
        <dbReference type="ChEBI" id="CHEBI:37565"/>
        <dbReference type="ChEBI" id="CHEBI:43474"/>
        <dbReference type="ChEBI" id="CHEBI:57567"/>
        <dbReference type="ChEBI" id="CHEBI:58053"/>
        <dbReference type="ChEBI" id="CHEBI:58189"/>
        <dbReference type="EC" id="6.3.4.4"/>
    </reaction>
</comment>
<comment type="cofactor">
    <cofactor evidence="1">
        <name>Mg(2+)</name>
        <dbReference type="ChEBI" id="CHEBI:18420"/>
    </cofactor>
    <text evidence="1">Binds 1 Mg(2+) ion per subunit.</text>
</comment>
<comment type="pathway">
    <text evidence="1">Purine metabolism; AMP biosynthesis via de novo pathway; AMP from IMP: step 1/2.</text>
</comment>
<comment type="subunit">
    <text evidence="1">Homodimer.</text>
</comment>
<comment type="subcellular location">
    <subcellularLocation>
        <location evidence="1">Cytoplasm</location>
    </subcellularLocation>
</comment>
<comment type="similarity">
    <text evidence="1">Belongs to the adenylosuccinate synthetase family.</text>
</comment>
<accession>B8J4N1</accession>
<reference key="1">
    <citation type="submission" date="2009-01" db="EMBL/GenBank/DDBJ databases">
        <title>Complete sequence of Desulfovibrio desulfuricans subsp. desulfuricans str. ATCC 27774.</title>
        <authorList>
            <consortium name="US DOE Joint Genome Institute"/>
            <person name="Lucas S."/>
            <person name="Copeland A."/>
            <person name="Lapidus A."/>
            <person name="Glavina del Rio T."/>
            <person name="Tice H."/>
            <person name="Bruce D."/>
            <person name="Goodwin L."/>
            <person name="Pitluck S."/>
            <person name="Sims D."/>
            <person name="Lu M."/>
            <person name="Kiss H."/>
            <person name="Meineke L."/>
            <person name="Brettin T."/>
            <person name="Detter J.C."/>
            <person name="Han C."/>
            <person name="Larimer F."/>
            <person name="Land M."/>
            <person name="Hauser L."/>
            <person name="Kyrpides N."/>
            <person name="Ovchinnikova G."/>
            <person name="Hazen T.C."/>
        </authorList>
    </citation>
    <scope>NUCLEOTIDE SEQUENCE [LARGE SCALE GENOMIC DNA]</scope>
    <source>
        <strain>ATCC 27774 / DSM 6949 / MB</strain>
    </source>
</reference>
<feature type="chain" id="PRO_1000194748" description="Adenylosuccinate synthetase">
    <location>
        <begin position="1"/>
        <end position="425"/>
    </location>
</feature>
<feature type="active site" description="Proton acceptor" evidence="1">
    <location>
        <position position="13"/>
    </location>
</feature>
<feature type="active site" description="Proton donor" evidence="1">
    <location>
        <position position="41"/>
    </location>
</feature>
<feature type="binding site" evidence="1">
    <location>
        <begin position="12"/>
        <end position="18"/>
    </location>
    <ligand>
        <name>GTP</name>
        <dbReference type="ChEBI" id="CHEBI:37565"/>
    </ligand>
</feature>
<feature type="binding site" description="in other chain" evidence="1">
    <location>
        <begin position="13"/>
        <end position="16"/>
    </location>
    <ligand>
        <name>IMP</name>
        <dbReference type="ChEBI" id="CHEBI:58053"/>
        <note>ligand shared between dimeric partners</note>
    </ligand>
</feature>
<feature type="binding site" evidence="1">
    <location>
        <position position="13"/>
    </location>
    <ligand>
        <name>Mg(2+)</name>
        <dbReference type="ChEBI" id="CHEBI:18420"/>
    </ligand>
</feature>
<feature type="binding site" description="in other chain" evidence="1">
    <location>
        <begin position="38"/>
        <end position="41"/>
    </location>
    <ligand>
        <name>IMP</name>
        <dbReference type="ChEBI" id="CHEBI:58053"/>
        <note>ligand shared between dimeric partners</note>
    </ligand>
</feature>
<feature type="binding site" evidence="1">
    <location>
        <begin position="40"/>
        <end position="42"/>
    </location>
    <ligand>
        <name>GTP</name>
        <dbReference type="ChEBI" id="CHEBI:37565"/>
    </ligand>
</feature>
<feature type="binding site" evidence="1">
    <location>
        <position position="40"/>
    </location>
    <ligand>
        <name>Mg(2+)</name>
        <dbReference type="ChEBI" id="CHEBI:18420"/>
    </ligand>
</feature>
<feature type="binding site" description="in other chain" evidence="1">
    <location>
        <position position="130"/>
    </location>
    <ligand>
        <name>IMP</name>
        <dbReference type="ChEBI" id="CHEBI:58053"/>
        <note>ligand shared between dimeric partners</note>
    </ligand>
</feature>
<feature type="binding site" evidence="1">
    <location>
        <position position="144"/>
    </location>
    <ligand>
        <name>IMP</name>
        <dbReference type="ChEBI" id="CHEBI:58053"/>
        <note>ligand shared between dimeric partners</note>
    </ligand>
</feature>
<feature type="binding site" description="in other chain" evidence="1">
    <location>
        <position position="225"/>
    </location>
    <ligand>
        <name>IMP</name>
        <dbReference type="ChEBI" id="CHEBI:58053"/>
        <note>ligand shared between dimeric partners</note>
    </ligand>
</feature>
<feature type="binding site" description="in other chain" evidence="1">
    <location>
        <position position="240"/>
    </location>
    <ligand>
        <name>IMP</name>
        <dbReference type="ChEBI" id="CHEBI:58053"/>
        <note>ligand shared between dimeric partners</note>
    </ligand>
</feature>
<feature type="binding site" evidence="1">
    <location>
        <begin position="300"/>
        <end position="306"/>
    </location>
    <ligand>
        <name>substrate</name>
    </ligand>
</feature>
<feature type="binding site" description="in other chain" evidence="1">
    <location>
        <position position="304"/>
    </location>
    <ligand>
        <name>IMP</name>
        <dbReference type="ChEBI" id="CHEBI:58053"/>
        <note>ligand shared between dimeric partners</note>
    </ligand>
</feature>
<feature type="binding site" evidence="1">
    <location>
        <position position="306"/>
    </location>
    <ligand>
        <name>GTP</name>
        <dbReference type="ChEBI" id="CHEBI:37565"/>
    </ligand>
</feature>
<feature type="binding site" evidence="1">
    <location>
        <begin position="332"/>
        <end position="334"/>
    </location>
    <ligand>
        <name>GTP</name>
        <dbReference type="ChEBI" id="CHEBI:37565"/>
    </ligand>
</feature>
<feature type="binding site" evidence="1">
    <location>
        <begin position="414"/>
        <end position="416"/>
    </location>
    <ligand>
        <name>GTP</name>
        <dbReference type="ChEBI" id="CHEBI:37565"/>
    </ligand>
</feature>
<gene>
    <name evidence="1" type="primary">purA</name>
    <name type="ordered locus">Ddes_2266</name>
</gene>
<protein>
    <recommendedName>
        <fullName evidence="1">Adenylosuccinate synthetase</fullName>
        <shortName evidence="1">AMPSase</shortName>
        <shortName evidence="1">AdSS</shortName>
        <ecNumber evidence="1">6.3.4.4</ecNumber>
    </recommendedName>
    <alternativeName>
        <fullName evidence="1">IMP--aspartate ligase</fullName>
    </alternativeName>
</protein>